<feature type="chain" id="PRO_0000207846" description="Protein transport protein HofC homolog">
    <location>
        <begin position="1"/>
        <end position="406"/>
    </location>
</feature>
<feature type="transmembrane region" description="Helical" evidence="2">
    <location>
        <begin position="167"/>
        <end position="187"/>
    </location>
</feature>
<feature type="transmembrane region" description="Helical" evidence="2">
    <location>
        <begin position="214"/>
        <end position="234"/>
    </location>
</feature>
<feature type="transmembrane region" description="Helical" evidence="2">
    <location>
        <begin position="379"/>
        <end position="399"/>
    </location>
</feature>
<accession>P44621</accession>
<evidence type="ECO:0000250" key="1"/>
<evidence type="ECO:0000255" key="2"/>
<evidence type="ECO:0000305" key="3"/>
<dbReference type="EMBL" id="L42023">
    <property type="protein sequence ID" value="AAC21961.1"/>
    <property type="molecule type" value="Genomic_DNA"/>
</dbReference>
<dbReference type="PIR" id="D64060">
    <property type="entry name" value="D64060"/>
</dbReference>
<dbReference type="RefSeq" id="NP_438464.1">
    <property type="nucleotide sequence ID" value="NC_000907.1"/>
</dbReference>
<dbReference type="SMR" id="P44621"/>
<dbReference type="STRING" id="71421.HI_0297"/>
<dbReference type="EnsemblBacteria" id="AAC21961">
    <property type="protein sequence ID" value="AAC21961"/>
    <property type="gene ID" value="HI_0297"/>
</dbReference>
<dbReference type="KEGG" id="hin:HI_0297"/>
<dbReference type="PATRIC" id="fig|71421.8.peg.313"/>
<dbReference type="eggNOG" id="COG1459">
    <property type="taxonomic scope" value="Bacteria"/>
</dbReference>
<dbReference type="HOGENOM" id="CLU_035032_0_1_6"/>
<dbReference type="OrthoDB" id="9805682at2"/>
<dbReference type="PhylomeDB" id="P44621"/>
<dbReference type="BioCyc" id="HINF71421:G1GJ1-315-MONOMER"/>
<dbReference type="Proteomes" id="UP000000579">
    <property type="component" value="Chromosome"/>
</dbReference>
<dbReference type="GO" id="GO:0005886">
    <property type="term" value="C:plasma membrane"/>
    <property type="evidence" value="ECO:0000318"/>
    <property type="project" value="GO_Central"/>
</dbReference>
<dbReference type="GO" id="GO:0015628">
    <property type="term" value="P:protein secretion by the type II secretion system"/>
    <property type="evidence" value="ECO:0000318"/>
    <property type="project" value="GO_Central"/>
</dbReference>
<dbReference type="Gene3D" id="1.20.81.30">
    <property type="entry name" value="Type II secretion system (T2SS), domain F"/>
    <property type="match status" value="2"/>
</dbReference>
<dbReference type="InterPro" id="IPR003004">
    <property type="entry name" value="GspF/PilC"/>
</dbReference>
<dbReference type="InterPro" id="IPR001992">
    <property type="entry name" value="T2SS_GspF/T4SS_PilC_CS"/>
</dbReference>
<dbReference type="InterPro" id="IPR018076">
    <property type="entry name" value="T2SS_GspF_dom"/>
</dbReference>
<dbReference type="InterPro" id="IPR042094">
    <property type="entry name" value="T2SS_GspF_sf"/>
</dbReference>
<dbReference type="PANTHER" id="PTHR30012">
    <property type="entry name" value="GENERAL SECRETION PATHWAY PROTEIN"/>
    <property type="match status" value="1"/>
</dbReference>
<dbReference type="PANTHER" id="PTHR30012:SF7">
    <property type="entry name" value="PROTEIN TRANSPORT PROTEIN HOFC HOMOLOG"/>
    <property type="match status" value="1"/>
</dbReference>
<dbReference type="Pfam" id="PF00482">
    <property type="entry name" value="T2SSF"/>
    <property type="match status" value="2"/>
</dbReference>
<dbReference type="PRINTS" id="PR00812">
    <property type="entry name" value="BCTERIALGSPF"/>
</dbReference>
<dbReference type="PROSITE" id="PS00874">
    <property type="entry name" value="T2SP_F"/>
    <property type="match status" value="1"/>
</dbReference>
<gene>
    <name type="primary">hofC</name>
    <name type="synonym">hopC</name>
    <name type="ordered locus">HI_0297</name>
</gene>
<comment type="subcellular location">
    <subcellularLocation>
        <location evidence="1">Cell inner membrane</location>
        <topology evidence="1">Multi-pass membrane protein</topology>
    </subcellularLocation>
</comment>
<comment type="similarity">
    <text evidence="3">Belongs to the GSP F family.</text>
</comment>
<name>HOFC_HAEIN</name>
<organism>
    <name type="scientific">Haemophilus influenzae (strain ATCC 51907 / DSM 11121 / KW20 / Rd)</name>
    <dbReference type="NCBI Taxonomy" id="71421"/>
    <lineage>
        <taxon>Bacteria</taxon>
        <taxon>Pseudomonadati</taxon>
        <taxon>Pseudomonadota</taxon>
        <taxon>Gammaproteobacteria</taxon>
        <taxon>Pasteurellales</taxon>
        <taxon>Pasteurellaceae</taxon>
        <taxon>Haemophilus</taxon>
    </lineage>
</organism>
<sequence length="406" mass="46291">MTKKLFYYQASNPLNQKQKGSIIADTKQQAHFQLISRGLTHIKLQQNWQFGAKPKNSEISELLNQLATLLQSAIPLKNSLQILQQNCTQIVLNEWLERLLQSIESGLAFSQAIEQQGKYLTQQEIQLIQVGEMTGKLAVVCKKIATHRSQSLALQRKLQKIMLYPSMVLGISLLLTLALLLFIVPQFAEMYSGNNAELPTITAILLSISNFLKQNIGILLFFVLSFFLFYYFYLKRQTWFYQKKNQLISITPIFGTIQKLSRLVNFSQSLQIMLQAGVPLNQALDSFLPRTQTWQTKKTLVNDIVLDKEVRSILQWVSQGYAFSNSVSSDLFPMEAQQMLQIGEQSGKLALMLEHIAENYQEKLNHQIDLLSQMLEPLMMVIIGSLIGIIMMGMYLPIFNMGSVIQ</sequence>
<keyword id="KW-0997">Cell inner membrane</keyword>
<keyword id="KW-1003">Cell membrane</keyword>
<keyword id="KW-0472">Membrane</keyword>
<keyword id="KW-1185">Reference proteome</keyword>
<keyword id="KW-0812">Transmembrane</keyword>
<keyword id="KW-1133">Transmembrane helix</keyword>
<keyword id="KW-0813">Transport</keyword>
<reference key="1">
    <citation type="journal article" date="1995" name="Science">
        <title>Whole-genome random sequencing and assembly of Haemophilus influenzae Rd.</title>
        <authorList>
            <person name="Fleischmann R.D."/>
            <person name="Adams M.D."/>
            <person name="White O."/>
            <person name="Clayton R.A."/>
            <person name="Kirkness E.F."/>
            <person name="Kerlavage A.R."/>
            <person name="Bult C.J."/>
            <person name="Tomb J.-F."/>
            <person name="Dougherty B.A."/>
            <person name="Merrick J.M."/>
            <person name="McKenney K."/>
            <person name="Sutton G.G."/>
            <person name="FitzHugh W."/>
            <person name="Fields C.A."/>
            <person name="Gocayne J.D."/>
            <person name="Scott J.D."/>
            <person name="Shirley R."/>
            <person name="Liu L.-I."/>
            <person name="Glodek A."/>
            <person name="Kelley J.M."/>
            <person name="Weidman J.F."/>
            <person name="Phillips C.A."/>
            <person name="Spriggs T."/>
            <person name="Hedblom E."/>
            <person name="Cotton M.D."/>
            <person name="Utterback T.R."/>
            <person name="Hanna M.C."/>
            <person name="Nguyen D.T."/>
            <person name="Saudek D.M."/>
            <person name="Brandon R.C."/>
            <person name="Fine L.D."/>
            <person name="Fritchman J.L."/>
            <person name="Fuhrmann J.L."/>
            <person name="Geoghagen N.S.M."/>
            <person name="Gnehm C.L."/>
            <person name="McDonald L.A."/>
            <person name="Small K.V."/>
            <person name="Fraser C.M."/>
            <person name="Smith H.O."/>
            <person name="Venter J.C."/>
        </authorList>
    </citation>
    <scope>NUCLEOTIDE SEQUENCE [LARGE SCALE GENOMIC DNA]</scope>
    <source>
        <strain>ATCC 51907 / DSM 11121 / KW20 / Rd</strain>
    </source>
</reference>
<protein>
    <recommendedName>
        <fullName>Protein transport protein HofC homolog</fullName>
    </recommendedName>
</protein>
<proteinExistence type="inferred from homology"/>